<proteinExistence type="inferred from homology"/>
<keyword id="KW-0325">Glycoprotein</keyword>
<keyword id="KW-0328">Glycosyltransferase</keyword>
<keyword id="KW-0333">Golgi apparatus</keyword>
<keyword id="KW-0443">Lipid metabolism</keyword>
<keyword id="KW-0472">Membrane</keyword>
<keyword id="KW-0735">Signal-anchor</keyword>
<keyword id="KW-0808">Transferase</keyword>
<keyword id="KW-0812">Transmembrane</keyword>
<keyword id="KW-1133">Transmembrane helix</keyword>
<organism>
    <name type="scientific">Alouatta caraya</name>
    <name type="common">Black howler monkey</name>
    <dbReference type="NCBI Taxonomy" id="9502"/>
    <lineage>
        <taxon>Eukaryota</taxon>
        <taxon>Metazoa</taxon>
        <taxon>Chordata</taxon>
        <taxon>Craniata</taxon>
        <taxon>Vertebrata</taxon>
        <taxon>Euteleostomi</taxon>
        <taxon>Mammalia</taxon>
        <taxon>Eutheria</taxon>
        <taxon>Euarchontoglires</taxon>
        <taxon>Primates</taxon>
        <taxon>Haplorrhini</taxon>
        <taxon>Platyrrhini</taxon>
        <taxon>Atelidae</taxon>
        <taxon>Alouattinae</taxon>
        <taxon>Alouatta</taxon>
    </lineage>
</organism>
<dbReference type="EC" id="2.4.1.69" evidence="2"/>
<dbReference type="EC" id="2.4.1.344" evidence="3"/>
<dbReference type="EMBL" id="AY219624">
    <property type="protein sequence ID" value="AAO43066.1"/>
    <property type="molecule type" value="Genomic_DNA"/>
</dbReference>
<dbReference type="SMR" id="Q866E4"/>
<dbReference type="CAZy" id="GT11">
    <property type="family name" value="Glycosyltransferase Family 11"/>
</dbReference>
<dbReference type="GlyCosmos" id="Q866E4">
    <property type="glycosylation" value="3 sites, No reported glycans"/>
</dbReference>
<dbReference type="UniPathway" id="UPA00378"/>
<dbReference type="GO" id="GO:0032580">
    <property type="term" value="C:Golgi cisterna membrane"/>
    <property type="evidence" value="ECO:0007669"/>
    <property type="project" value="UniProtKB-SubCell"/>
</dbReference>
<dbReference type="GO" id="GO:0031127">
    <property type="term" value="F:alpha-(1,2)-fucosyltransferase activity"/>
    <property type="evidence" value="ECO:0000250"/>
    <property type="project" value="UniProtKB"/>
</dbReference>
<dbReference type="GO" id="GO:0008107">
    <property type="term" value="F:galactoside 2-alpha-L-fucosyltransferase activity"/>
    <property type="evidence" value="ECO:0007669"/>
    <property type="project" value="UniProtKB-EC"/>
</dbReference>
<dbReference type="GO" id="GO:0005975">
    <property type="term" value="P:carbohydrate metabolic process"/>
    <property type="evidence" value="ECO:0007669"/>
    <property type="project" value="InterPro"/>
</dbReference>
<dbReference type="GO" id="GO:0036065">
    <property type="term" value="P:fucosylation"/>
    <property type="evidence" value="ECO:0000250"/>
    <property type="project" value="UniProtKB"/>
</dbReference>
<dbReference type="GO" id="GO:0006629">
    <property type="term" value="P:lipid metabolic process"/>
    <property type="evidence" value="ECO:0007669"/>
    <property type="project" value="UniProtKB-KW"/>
</dbReference>
<dbReference type="GO" id="GO:0021772">
    <property type="term" value="P:olfactory bulb development"/>
    <property type="evidence" value="ECO:0000250"/>
    <property type="project" value="UniProtKB"/>
</dbReference>
<dbReference type="GO" id="GO:0001954">
    <property type="term" value="P:positive regulation of cell-matrix adhesion"/>
    <property type="evidence" value="ECO:0000250"/>
    <property type="project" value="UniProtKB"/>
</dbReference>
<dbReference type="GO" id="GO:0010595">
    <property type="term" value="P:positive regulation of endothelial cell migration"/>
    <property type="evidence" value="ECO:0000250"/>
    <property type="project" value="UniProtKB"/>
</dbReference>
<dbReference type="GO" id="GO:1904906">
    <property type="term" value="P:positive regulation of endothelial cell-matrix adhesion via fibronectin"/>
    <property type="evidence" value="ECO:0000250"/>
    <property type="project" value="UniProtKB"/>
</dbReference>
<dbReference type="GO" id="GO:1903672">
    <property type="term" value="P:positive regulation of sprouting angiogenesis"/>
    <property type="evidence" value="ECO:0000250"/>
    <property type="project" value="UniProtKB"/>
</dbReference>
<dbReference type="GO" id="GO:0006486">
    <property type="term" value="P:protein glycosylation"/>
    <property type="evidence" value="ECO:0000250"/>
    <property type="project" value="UniProtKB"/>
</dbReference>
<dbReference type="GO" id="GO:0030155">
    <property type="term" value="P:regulation of cell adhesion"/>
    <property type="evidence" value="ECO:0000250"/>
    <property type="project" value="UniProtKB"/>
</dbReference>
<dbReference type="GO" id="GO:0001936">
    <property type="term" value="P:regulation of endothelial cell proliferation"/>
    <property type="evidence" value="ECO:0000250"/>
    <property type="project" value="UniProtKB"/>
</dbReference>
<dbReference type="CDD" id="cd11301">
    <property type="entry name" value="Fut1_Fut2_like"/>
    <property type="match status" value="1"/>
</dbReference>
<dbReference type="InterPro" id="IPR002516">
    <property type="entry name" value="Glyco_trans_11"/>
</dbReference>
<dbReference type="PANTHER" id="PTHR11927">
    <property type="entry name" value="GALACTOSIDE 2-L-FUCOSYLTRANSFERASE"/>
    <property type="match status" value="1"/>
</dbReference>
<dbReference type="PANTHER" id="PTHR11927:SF4">
    <property type="entry name" value="GALACTOSIDE ALPHA-(1,2)-FUCOSYLTRANSFERASE 1"/>
    <property type="match status" value="1"/>
</dbReference>
<dbReference type="Pfam" id="PF01531">
    <property type="entry name" value="Glyco_transf_11"/>
    <property type="match status" value="1"/>
</dbReference>
<name>FUT1_ALOCA</name>
<evidence type="ECO:0000250" key="1">
    <source>
        <dbReference type="UniProtKB" id="F6Q1T7"/>
    </source>
</evidence>
<evidence type="ECO:0000250" key="2">
    <source>
        <dbReference type="UniProtKB" id="O09160"/>
    </source>
</evidence>
<evidence type="ECO:0000250" key="3">
    <source>
        <dbReference type="UniProtKB" id="P19526"/>
    </source>
</evidence>
<evidence type="ECO:0000255" key="4"/>
<evidence type="ECO:0000305" key="5"/>
<sequence length="366" mass="41538">MWPLSHRHLCLAFLLVCVLSAISFFLHVHQDSFRHGLGLSLLCPDRGLVTHPVAIFCLPGTPMSPNTSSPCPQHPASLSGTWTIYPDGRFGNQMGQYATLLALAQLNGRRAFILPAMHAALAPVFRITLPVLAPEVDGHTPWRELRLHDWMSEEYADLEDPFLKLSGFPCSWTFFHHLREQIRSEFTLHDHLREEAQSVLRRLRLGRPWDRPRTFVGVHVRRGDYLQVMPQRWKGVVGNSAYLREAMDWFRARHEAPVFVVTSNGMEWCRENIDTSKGDVMFAGDGQEASPWKDFALLTQCNHTIMTIGTFGFWAAYLAGGDTVYLANFTLPDSEFLKIFKPEAAFLPEWVGINADLSPLWTLAEP</sequence>
<reference key="1">
    <citation type="submission" date="2003-01" db="EMBL/GenBank/DDBJ databases">
        <title>Molecular evolution of the H (FUT1) gene in New World monkeys (Primates, Platyrrhini): evidence of divergent evolution and purifying selection.</title>
        <authorList>
            <person name="Borges B.N."/>
            <person name="Harada M.L."/>
        </authorList>
    </citation>
    <scope>NUCLEOTIDE SEQUENCE [GENOMIC DNA]</scope>
</reference>
<gene>
    <name evidence="3" type="primary">FUT1</name>
</gene>
<accession>Q866E4</accession>
<feature type="chain" id="PRO_0000149087" description="Galactoside alpha-(1,2)-fucosyltransferase 1">
    <location>
        <begin position="1"/>
        <end position="366"/>
    </location>
</feature>
<feature type="topological domain" description="Cytoplasmic" evidence="4">
    <location>
        <begin position="1"/>
        <end position="8"/>
    </location>
</feature>
<feature type="transmembrane region" description="Helical; Signal-anchor for type II membrane protein" evidence="4">
    <location>
        <begin position="9"/>
        <end position="25"/>
    </location>
</feature>
<feature type="topological domain" description="Lumenal" evidence="4">
    <location>
        <begin position="26"/>
        <end position="366"/>
    </location>
</feature>
<feature type="glycosylation site" description="N-linked (GlcNAc...) asparagine" evidence="4">
    <location>
        <position position="66"/>
    </location>
</feature>
<feature type="glycosylation site" description="N-linked (GlcNAc...) asparagine" evidence="4">
    <location>
        <position position="302"/>
    </location>
</feature>
<feature type="glycosylation site" description="N-linked (GlcNAc...) asparagine" evidence="4">
    <location>
        <position position="328"/>
    </location>
</feature>
<comment type="function">
    <text evidence="2 3">Catalyzes the transfer of L-fucose, from a guanosine diphosphate-beta-L-fucose, to the terminal galactose residue of glycoconjugates through an alpha(1,2) linkage leading to H antigen synthesis that is an intermediate substrate in the synthesis of ABO blood group antigens. H antigen is essential for maturation of the glomerular layer of the main olfactory bulb, in cell migration and early cell-cell contacts during tumor associated angiogenesis (By similarity). Preferentially fucosylates soluble lactose and to a lesser extent fucosylates glycolipids gangliosides GA1 and GM1a (By similarity).</text>
</comment>
<comment type="catalytic activity">
    <reaction evidence="3">
        <text>a beta-D-galactosyl-(1-&gt;4)-N-acetyl-beta-D-glucosaminyl derivative + GDP-beta-L-fucose = an alpha-L-Fuc-(1-&gt;2)-beta-D-Gal-(1-&gt;4)-beta-D-GlcNAc derivative + GDP + H(+)</text>
        <dbReference type="Rhea" id="RHEA:50668"/>
        <dbReference type="ChEBI" id="CHEBI:15378"/>
        <dbReference type="ChEBI" id="CHEBI:57273"/>
        <dbReference type="ChEBI" id="CHEBI:58189"/>
        <dbReference type="ChEBI" id="CHEBI:133507"/>
        <dbReference type="ChEBI" id="CHEBI:133510"/>
        <dbReference type="EC" id="2.4.1.344"/>
    </reaction>
</comment>
<comment type="catalytic activity">
    <reaction evidence="2">
        <text>a ganglioside GA1 + GDP-beta-L-fucose = a ganglioside Fuc-GA1 + GDP + H(+)</text>
        <dbReference type="Rhea" id="RHEA:48320"/>
        <dbReference type="ChEBI" id="CHEBI:15378"/>
        <dbReference type="ChEBI" id="CHEBI:57273"/>
        <dbReference type="ChEBI" id="CHEBI:58189"/>
        <dbReference type="ChEBI" id="CHEBI:88069"/>
        <dbReference type="ChEBI" id="CHEBI:90262"/>
    </reaction>
    <physiologicalReaction direction="left-to-right" evidence="2">
        <dbReference type="Rhea" id="RHEA:48321"/>
    </physiologicalReaction>
</comment>
<comment type="catalytic activity">
    <reaction evidence="2">
        <text>a beta-D-Gal-(1-&gt;3)-beta-D-GlcNAc-(1-&gt;3)-beta-D-Gal-(1-&gt;4)-beta-D-Glc-(1&lt;-&gt;1')-Cer(d18:1(4E)) + GDP-beta-L-fucose = alpha-L-fucosyl-(1-&gt;2)- beta-D-galactosyl-(1-&gt;3)-N-acetyl-beta-D-glucosaminyl-(1-&gt;3)-beta-D-galactosyl-(1-&gt;4)-beta-D-glucosyl-(1&lt;-&gt;1')-N-acylsphing-4-enine + GDP + H(+)</text>
        <dbReference type="Rhea" id="RHEA:32175"/>
        <dbReference type="ChEBI" id="CHEBI:15378"/>
        <dbReference type="ChEBI" id="CHEBI:17292"/>
        <dbReference type="ChEBI" id="CHEBI:28743"/>
        <dbReference type="ChEBI" id="CHEBI:57273"/>
        <dbReference type="ChEBI" id="CHEBI:58189"/>
        <dbReference type="EC" id="2.4.1.69"/>
    </reaction>
    <physiologicalReaction direction="left-to-right" evidence="2">
        <dbReference type="Rhea" id="RHEA:32176"/>
    </physiologicalReaction>
</comment>
<comment type="catalytic activity">
    <reaction evidence="2">
        <text>a neolactoside nLc4Cer(d18:1(4E)) + GDP-beta-L-fucose = a neolactoside IV(2)-alpha-Fuc-nLc4Cer(d18:1(4E)) + GDP + H(+)</text>
        <dbReference type="Rhea" id="RHEA:48304"/>
        <dbReference type="ChEBI" id="CHEBI:15378"/>
        <dbReference type="ChEBI" id="CHEBI:17006"/>
        <dbReference type="ChEBI" id="CHEBI:28691"/>
        <dbReference type="ChEBI" id="CHEBI:57273"/>
        <dbReference type="ChEBI" id="CHEBI:58189"/>
    </reaction>
    <physiologicalReaction direction="left-to-right" evidence="2">
        <dbReference type="Rhea" id="RHEA:48305"/>
    </physiologicalReaction>
</comment>
<comment type="catalytic activity">
    <reaction evidence="1">
        <text>a ganglioside GM1 + GDP-beta-L-fucose = a ganglioside Fuc-GM1 + GDP + H(+)</text>
        <dbReference type="Rhea" id="RHEA:48292"/>
        <dbReference type="ChEBI" id="CHEBI:15378"/>
        <dbReference type="ChEBI" id="CHEBI:57273"/>
        <dbReference type="ChEBI" id="CHEBI:58189"/>
        <dbReference type="ChEBI" id="CHEBI:82639"/>
        <dbReference type="ChEBI" id="CHEBI:90189"/>
    </reaction>
    <physiologicalReaction direction="left-to-right" evidence="1">
        <dbReference type="Rhea" id="RHEA:48293"/>
    </physiologicalReaction>
</comment>
<comment type="catalytic activity">
    <reaction evidence="1">
        <text>beta-D-galactosyl-(1-&gt;3)-N-acetyl-D-galactosamine + GDP-beta-L-fucose = alpha-L-fucosyl-(1-&gt;2)-beta-D-galactosyl-(1-&gt;3)-N-acetyl-D-galactosamine + GDP + H(+)</text>
        <dbReference type="Rhea" id="RHEA:62964"/>
        <dbReference type="ChEBI" id="CHEBI:15378"/>
        <dbReference type="ChEBI" id="CHEBI:57273"/>
        <dbReference type="ChEBI" id="CHEBI:58189"/>
        <dbReference type="ChEBI" id="CHEBI:84728"/>
        <dbReference type="ChEBI" id="CHEBI:546807"/>
    </reaction>
    <physiologicalReaction direction="left-to-right" evidence="1">
        <dbReference type="Rhea" id="RHEA:62965"/>
    </physiologicalReaction>
</comment>
<comment type="pathway">
    <text evidence="3">Protein modification; protein glycosylation.</text>
</comment>
<comment type="subcellular location">
    <subcellularLocation>
        <location evidence="2">Golgi apparatus</location>
        <location evidence="2">Golgi stack membrane</location>
        <topology evidence="2">Single-pass type II membrane protein</topology>
    </subcellularLocation>
    <text evidence="2">Membrane-bound form in trans cisternae of Golgi.</text>
</comment>
<comment type="similarity">
    <text evidence="5">Belongs to the glycosyltransferase 11 family.</text>
</comment>
<protein>
    <recommendedName>
        <fullName evidence="3">Galactoside alpha-(1,2)-fucosyltransferase 1</fullName>
    </recommendedName>
    <alternativeName>
        <fullName>Alpha(1,2)FT 1</fullName>
    </alternativeName>
    <alternativeName>
        <fullName>Fucosyltransferase 1</fullName>
    </alternativeName>
    <alternativeName>
        <fullName>GDP-L-fucose:beta-D-galactoside 2-alpha-L-fucosyltransferase 1</fullName>
    </alternativeName>
    <alternativeName>
        <fullName evidence="2">Type 1 galactoside alpha-(1,2)-fucosyltransferase FUT1</fullName>
        <ecNumber evidence="2">2.4.1.69</ecNumber>
    </alternativeName>
    <alternativeName>
        <fullName evidence="3">Type 2 galactoside alpha-(1,2)-fucosyltransferase FUT1</fullName>
        <ecNumber evidence="3">2.4.1.344</ecNumber>
    </alternativeName>
</protein>